<protein>
    <recommendedName>
        <fullName>T-complex protein 1 subunit theta</fullName>
        <shortName>TCP-1-theta</shortName>
    </recommendedName>
    <alternativeName>
        <fullName>CCT-theta</fullName>
    </alternativeName>
</protein>
<keyword id="KW-0067">ATP-binding</keyword>
<keyword id="KW-0143">Chaperone</keyword>
<keyword id="KW-0963">Cytoplasm</keyword>
<keyword id="KW-0547">Nucleotide-binding</keyword>
<keyword id="KW-1185">Reference proteome</keyword>
<sequence>MLGLTDMLKDGAKHFAGKDEAILRNIDATKQLSEITRTSLGPNGMNKMIINHLEKLFVTNDAATIIRELDVIHPAAKMLVMAAQMQEQEMGDGTNYVVTLTGEFLQKAATLLEMGLHPSEIITGFEKAGAKLQEIIESMIVYNLKDITDKKEVTKCLKSAIASKQYGYEEFLSEIITNACLQVLPKKAVNFNIDNVRVTKIPGGGVTDTSVIKGFVIPMDAEGTIKRMEKAKIAVFTMGIDLGRTETTGKVLITNEDELLQFSKGEEDSIRETITAIANTGVKVIISGSTVSELALHYIERFKIMLVRIQSKFQLRRVCKAIGATPLVKLGAPIPEELGYCDEVLVEEIGSTKCCIFRQNKEESEISTIVVRGSTNNILDDIERAIDDGVNVFKGMCKDGRFLAGAGAFEIEASRKLQAFADATPGLSQYSIRQYAEAFEIIPRTLAETSGHDSSKAISNIYAAHTKGNTNYGLDIESGQPKSVLEMDVLDAFASKLFAIKLATNTANTVLRVDQIIMSKPAGGPKPPKMGPTDADD</sequence>
<accession>Q552J0</accession>
<accession>Q75JG7</accession>
<reference key="1">
    <citation type="journal article" date="2002" name="Nature">
        <title>Sequence and analysis of chromosome 2 of Dictyostelium discoideum.</title>
        <authorList>
            <person name="Gloeckner G."/>
            <person name="Eichinger L."/>
            <person name="Szafranski K."/>
            <person name="Pachebat J.A."/>
            <person name="Bankier A.T."/>
            <person name="Dear P.H."/>
            <person name="Lehmann R."/>
            <person name="Baumgart C."/>
            <person name="Parra G."/>
            <person name="Abril J.F."/>
            <person name="Guigo R."/>
            <person name="Kumpf K."/>
            <person name="Tunggal B."/>
            <person name="Cox E.C."/>
            <person name="Quail M.A."/>
            <person name="Platzer M."/>
            <person name="Rosenthal A."/>
            <person name="Noegel A.A."/>
        </authorList>
    </citation>
    <scope>NUCLEOTIDE SEQUENCE [LARGE SCALE GENOMIC DNA]</scope>
    <source>
        <strain>AX4</strain>
    </source>
</reference>
<reference key="2">
    <citation type="journal article" date="2005" name="Nature">
        <title>The genome of the social amoeba Dictyostelium discoideum.</title>
        <authorList>
            <person name="Eichinger L."/>
            <person name="Pachebat J.A."/>
            <person name="Gloeckner G."/>
            <person name="Rajandream M.A."/>
            <person name="Sucgang R."/>
            <person name="Berriman M."/>
            <person name="Song J."/>
            <person name="Olsen R."/>
            <person name="Szafranski K."/>
            <person name="Xu Q."/>
            <person name="Tunggal B."/>
            <person name="Kummerfeld S."/>
            <person name="Madera M."/>
            <person name="Konfortov B.A."/>
            <person name="Rivero F."/>
            <person name="Bankier A.T."/>
            <person name="Lehmann R."/>
            <person name="Hamlin N."/>
            <person name="Davies R."/>
            <person name="Gaudet P."/>
            <person name="Fey P."/>
            <person name="Pilcher K."/>
            <person name="Chen G."/>
            <person name="Saunders D."/>
            <person name="Sodergren E.J."/>
            <person name="Davis P."/>
            <person name="Kerhornou A."/>
            <person name="Nie X."/>
            <person name="Hall N."/>
            <person name="Anjard C."/>
            <person name="Hemphill L."/>
            <person name="Bason N."/>
            <person name="Farbrother P."/>
            <person name="Desany B."/>
            <person name="Just E."/>
            <person name="Morio T."/>
            <person name="Rost R."/>
            <person name="Churcher C.M."/>
            <person name="Cooper J."/>
            <person name="Haydock S."/>
            <person name="van Driessche N."/>
            <person name="Cronin A."/>
            <person name="Goodhead I."/>
            <person name="Muzny D.M."/>
            <person name="Mourier T."/>
            <person name="Pain A."/>
            <person name="Lu M."/>
            <person name="Harper D."/>
            <person name="Lindsay R."/>
            <person name="Hauser H."/>
            <person name="James K.D."/>
            <person name="Quiles M."/>
            <person name="Madan Babu M."/>
            <person name="Saito T."/>
            <person name="Buchrieser C."/>
            <person name="Wardroper A."/>
            <person name="Felder M."/>
            <person name="Thangavelu M."/>
            <person name="Johnson D."/>
            <person name="Knights A."/>
            <person name="Loulseged H."/>
            <person name="Mungall K.L."/>
            <person name="Oliver K."/>
            <person name="Price C."/>
            <person name="Quail M.A."/>
            <person name="Urushihara H."/>
            <person name="Hernandez J."/>
            <person name="Rabbinowitsch E."/>
            <person name="Steffen D."/>
            <person name="Sanders M."/>
            <person name="Ma J."/>
            <person name="Kohara Y."/>
            <person name="Sharp S."/>
            <person name="Simmonds M.N."/>
            <person name="Spiegler S."/>
            <person name="Tivey A."/>
            <person name="Sugano S."/>
            <person name="White B."/>
            <person name="Walker D."/>
            <person name="Woodward J.R."/>
            <person name="Winckler T."/>
            <person name="Tanaka Y."/>
            <person name="Shaulsky G."/>
            <person name="Schleicher M."/>
            <person name="Weinstock G.M."/>
            <person name="Rosenthal A."/>
            <person name="Cox E.C."/>
            <person name="Chisholm R.L."/>
            <person name="Gibbs R.A."/>
            <person name="Loomis W.F."/>
            <person name="Platzer M."/>
            <person name="Kay R.R."/>
            <person name="Williams J.G."/>
            <person name="Dear P.H."/>
            <person name="Noegel A.A."/>
            <person name="Barrell B.G."/>
            <person name="Kuspa A."/>
        </authorList>
    </citation>
    <scope>NUCLEOTIDE SEQUENCE [LARGE SCALE GENOMIC DNA]</scope>
    <source>
        <strain>AX4</strain>
    </source>
</reference>
<comment type="function">
    <text evidence="1">Molecular chaperone; assists the folding of proteins upon ATP hydrolysis. Known to play a role, in vitro, in the folding of actin and tubulin (By similarity).</text>
</comment>
<comment type="subunit">
    <text evidence="1">Heterooligomeric complex.</text>
</comment>
<comment type="subcellular location">
    <subcellularLocation>
        <location evidence="1">Cytoplasm</location>
    </subcellularLocation>
</comment>
<comment type="similarity">
    <text evidence="2">Belongs to the TCP-1 chaperonin family.</text>
</comment>
<organism>
    <name type="scientific">Dictyostelium discoideum</name>
    <name type="common">Social amoeba</name>
    <dbReference type="NCBI Taxonomy" id="44689"/>
    <lineage>
        <taxon>Eukaryota</taxon>
        <taxon>Amoebozoa</taxon>
        <taxon>Evosea</taxon>
        <taxon>Eumycetozoa</taxon>
        <taxon>Dictyostelia</taxon>
        <taxon>Dictyosteliales</taxon>
        <taxon>Dictyosteliaceae</taxon>
        <taxon>Dictyostelium</taxon>
    </lineage>
</organism>
<evidence type="ECO:0000250" key="1"/>
<evidence type="ECO:0000305" key="2"/>
<gene>
    <name type="primary">cct8</name>
    <name type="ORF">DDB_G0276233</name>
</gene>
<dbReference type="EMBL" id="AAFI02000014">
    <property type="protein sequence ID" value="EAL69416.1"/>
    <property type="molecule type" value="Genomic_DNA"/>
</dbReference>
<dbReference type="RefSeq" id="XP_643258.1">
    <property type="nucleotide sequence ID" value="XM_638166.1"/>
</dbReference>
<dbReference type="SMR" id="Q552J0"/>
<dbReference type="FunCoup" id="Q552J0">
    <property type="interactions" value="1017"/>
</dbReference>
<dbReference type="STRING" id="44689.Q552J0"/>
<dbReference type="PaxDb" id="44689-DDB0233996"/>
<dbReference type="EnsemblProtists" id="EAL69416">
    <property type="protein sequence ID" value="EAL69416"/>
    <property type="gene ID" value="DDB_G0276233"/>
</dbReference>
<dbReference type="GeneID" id="8620301"/>
<dbReference type="KEGG" id="ddi:DDB_G0276233"/>
<dbReference type="dictyBase" id="DDB_G0276233">
    <property type="gene designation" value="cct8"/>
</dbReference>
<dbReference type="VEuPathDB" id="AmoebaDB:DDB_G0276233"/>
<dbReference type="eggNOG" id="KOG0362">
    <property type="taxonomic scope" value="Eukaryota"/>
</dbReference>
<dbReference type="HOGENOM" id="CLU_008891_4_2_1"/>
<dbReference type="InParanoid" id="Q552J0"/>
<dbReference type="OMA" id="WGLKYAV"/>
<dbReference type="PhylomeDB" id="Q552J0"/>
<dbReference type="BRENDA" id="3.6.4.B10">
    <property type="organism ID" value="1939"/>
</dbReference>
<dbReference type="Reactome" id="R-DDI-390471">
    <property type="pathway name" value="Association of TriC/CCT with target proteins during biosynthesis"/>
</dbReference>
<dbReference type="Reactome" id="R-DDI-6798695">
    <property type="pathway name" value="Neutrophil degranulation"/>
</dbReference>
<dbReference type="Reactome" id="R-DDI-6814122">
    <property type="pathway name" value="Cooperation of PDCL (PhLP1) and TRiC/CCT in G-protein beta folding"/>
</dbReference>
<dbReference type="PRO" id="PR:Q552J0"/>
<dbReference type="Proteomes" id="UP000002195">
    <property type="component" value="Chromosome 2"/>
</dbReference>
<dbReference type="GO" id="GO:0005832">
    <property type="term" value="C:chaperonin-containing T-complex"/>
    <property type="evidence" value="ECO:0000250"/>
    <property type="project" value="dictyBase"/>
</dbReference>
<dbReference type="GO" id="GO:0005524">
    <property type="term" value="F:ATP binding"/>
    <property type="evidence" value="ECO:0007669"/>
    <property type="project" value="UniProtKB-KW"/>
</dbReference>
<dbReference type="GO" id="GO:0016887">
    <property type="term" value="F:ATP hydrolysis activity"/>
    <property type="evidence" value="ECO:0007669"/>
    <property type="project" value="InterPro"/>
</dbReference>
<dbReference type="GO" id="GO:0140662">
    <property type="term" value="F:ATP-dependent protein folding chaperone"/>
    <property type="evidence" value="ECO:0007669"/>
    <property type="project" value="InterPro"/>
</dbReference>
<dbReference type="GO" id="GO:0051082">
    <property type="term" value="F:unfolded protein binding"/>
    <property type="evidence" value="ECO:0000250"/>
    <property type="project" value="dictyBase"/>
</dbReference>
<dbReference type="GO" id="GO:0006457">
    <property type="term" value="P:protein folding"/>
    <property type="evidence" value="ECO:0000250"/>
    <property type="project" value="dictyBase"/>
</dbReference>
<dbReference type="CDD" id="cd03341">
    <property type="entry name" value="TCP1_theta"/>
    <property type="match status" value="1"/>
</dbReference>
<dbReference type="FunFam" id="3.50.7.10:FF:000008">
    <property type="entry name" value="T-complex protein 1 subunit theta"/>
    <property type="match status" value="1"/>
</dbReference>
<dbReference type="Gene3D" id="3.50.7.10">
    <property type="entry name" value="GroEL"/>
    <property type="match status" value="1"/>
</dbReference>
<dbReference type="Gene3D" id="1.10.560.10">
    <property type="entry name" value="GroEL-like equatorial domain"/>
    <property type="match status" value="1"/>
</dbReference>
<dbReference type="Gene3D" id="3.30.260.10">
    <property type="entry name" value="TCP-1-like chaperonin intermediate domain"/>
    <property type="match status" value="1"/>
</dbReference>
<dbReference type="InterPro" id="IPR012721">
    <property type="entry name" value="Chap_CCT_theta"/>
</dbReference>
<dbReference type="InterPro" id="IPR017998">
    <property type="entry name" value="Chaperone_TCP-1"/>
</dbReference>
<dbReference type="InterPro" id="IPR002194">
    <property type="entry name" value="Chaperonin_TCP-1_CS"/>
</dbReference>
<dbReference type="InterPro" id="IPR002423">
    <property type="entry name" value="Cpn60/GroEL/TCP-1"/>
</dbReference>
<dbReference type="InterPro" id="IPR027409">
    <property type="entry name" value="GroEL-like_apical_dom_sf"/>
</dbReference>
<dbReference type="InterPro" id="IPR027413">
    <property type="entry name" value="GROEL-like_equatorial_sf"/>
</dbReference>
<dbReference type="InterPro" id="IPR027410">
    <property type="entry name" value="TCP-1-like_intermed_sf"/>
</dbReference>
<dbReference type="NCBIfam" id="TIGR02346">
    <property type="entry name" value="chap_CCT_theta"/>
    <property type="match status" value="1"/>
</dbReference>
<dbReference type="PANTHER" id="PTHR11353">
    <property type="entry name" value="CHAPERONIN"/>
    <property type="match status" value="1"/>
</dbReference>
<dbReference type="Pfam" id="PF00118">
    <property type="entry name" value="Cpn60_TCP1"/>
    <property type="match status" value="1"/>
</dbReference>
<dbReference type="PRINTS" id="PR00304">
    <property type="entry name" value="TCOMPLEXTCP1"/>
</dbReference>
<dbReference type="SUPFAM" id="SSF52029">
    <property type="entry name" value="GroEL apical domain-like"/>
    <property type="match status" value="1"/>
</dbReference>
<dbReference type="SUPFAM" id="SSF48592">
    <property type="entry name" value="GroEL equatorial domain-like"/>
    <property type="match status" value="1"/>
</dbReference>
<dbReference type="SUPFAM" id="SSF54849">
    <property type="entry name" value="GroEL-intermediate domain like"/>
    <property type="match status" value="1"/>
</dbReference>
<dbReference type="PROSITE" id="PS00750">
    <property type="entry name" value="TCP1_1"/>
    <property type="match status" value="1"/>
</dbReference>
<dbReference type="PROSITE" id="PS00751">
    <property type="entry name" value="TCP1_2"/>
    <property type="match status" value="1"/>
</dbReference>
<dbReference type="PROSITE" id="PS00995">
    <property type="entry name" value="TCP1_3"/>
    <property type="match status" value="1"/>
</dbReference>
<name>TCPQ_DICDI</name>
<proteinExistence type="inferred from homology"/>
<feature type="chain" id="PRO_0000327900" description="T-complex protein 1 subunit theta">
    <location>
        <begin position="1"/>
        <end position="537"/>
    </location>
</feature>